<comment type="function">
    <text evidence="2 3">Component of the intraflagellar transport (IFT) complex B: together with IFT74, forms a tubulin-binding module that specifically mediates transport of tubulin within the cilium. Binds tubulin via its CH (calponin-homology)-like region. Required for ciliogenesis. Required for proper regulation of SHH signaling (By similarity). Plays an important role during spermatogenesis by modulating the assembly and elongation of the sperm flagella (By similarity).</text>
</comment>
<comment type="subunit">
    <text evidence="2 3">Component of the IFT complex B, at least composed of IFT20, IFT22, IFT25, IFT27, IFT46, IFT52, TRAF3IP1/IFT54, IFT57, IFT74, IFT80, IFT81, and IFT88. Interacts with IFT74; the interaction is direct: within the IFT complex B, IFT74 and IFT81 mediate the transport of tubulin within the cilium. Interacts with tubulin; the interaction is direct (By similarity). Interacts with IFT57 and IFT70B (By similarity). Interacts with RABL2/RABL2A; binding is equal in the presence of GTP or GDP. Interacts with IFT88 (By similarity). Interacts (via the IFT74/IFT81 heterodimer) with RABL2B (By similarity). Interacts with CFAP61 (By similarity).</text>
</comment>
<comment type="subcellular location">
    <subcellularLocation>
        <location evidence="2">Cell projection</location>
        <location evidence="2">Cilium</location>
    </subcellularLocation>
    <subcellularLocation>
        <location evidence="2">Cytoplasm</location>
    </subcellularLocation>
    <subcellularLocation>
        <location evidence="3">Cytoplasm</location>
        <location evidence="3">Cytoskeleton</location>
        <location evidence="3">Cilium basal body</location>
    </subcellularLocation>
</comment>
<comment type="domain">
    <text evidence="1">The CH (calponin-homology)-like region shows high similarity to a CH (calponin-homology) domain and mediates binding to the globular domain of tubulin.</text>
</comment>
<comment type="similarity">
    <text evidence="5">Belongs to the IFT81 family.</text>
</comment>
<feature type="initiator methionine" description="Removed" evidence="3">
    <location>
        <position position="1"/>
    </location>
</feature>
<feature type="chain" id="PRO_0000084171" description="Intraflagellar transport protein 81 homolog">
    <location>
        <begin position="2"/>
        <end position="675"/>
    </location>
</feature>
<feature type="region of interest" description="CH (calponin-homology)-like region" evidence="1">
    <location>
        <begin position="2"/>
        <end position="121"/>
    </location>
</feature>
<feature type="coiled-coil region" evidence="4">
    <location>
        <begin position="132"/>
        <end position="258"/>
    </location>
</feature>
<feature type="coiled-coil region" evidence="4">
    <location>
        <begin position="306"/>
        <end position="389"/>
    </location>
</feature>
<feature type="coiled-coil region" evidence="4">
    <location>
        <begin position="433"/>
        <end position="453"/>
    </location>
</feature>
<feature type="coiled-coil region" evidence="4">
    <location>
        <begin position="509"/>
        <end position="627"/>
    </location>
</feature>
<feature type="modified residue" description="N-acetylserine" evidence="3">
    <location>
        <position position="2"/>
    </location>
</feature>
<feature type="modified residue" description="Phosphothreonine" evidence="3">
    <location>
        <position position="61"/>
    </location>
</feature>
<dbReference type="EMBL" id="AY345164">
    <property type="protein sequence ID" value="AAQ23131.1"/>
    <property type="molecule type" value="mRNA"/>
</dbReference>
<dbReference type="RefSeq" id="NP_954551.1">
    <property type="nucleotide sequence ID" value="NM_199120.1"/>
</dbReference>
<dbReference type="SMR" id="P83829"/>
<dbReference type="FunCoup" id="P83829">
    <property type="interactions" value="1563"/>
</dbReference>
<dbReference type="STRING" id="10116.ENSRNOP00000061697"/>
<dbReference type="PhosphoSitePlus" id="P83829"/>
<dbReference type="jPOST" id="P83829"/>
<dbReference type="PaxDb" id="10116-ENSRNOP00000061697"/>
<dbReference type="GeneID" id="373066"/>
<dbReference type="KEGG" id="rno:373066"/>
<dbReference type="UCSC" id="RGD:727862">
    <property type="organism name" value="rat"/>
</dbReference>
<dbReference type="AGR" id="RGD:727862"/>
<dbReference type="CTD" id="28981"/>
<dbReference type="RGD" id="727862">
    <property type="gene designation" value="Ift81"/>
</dbReference>
<dbReference type="eggNOG" id="ENOG502QSBR">
    <property type="taxonomic scope" value="Eukaryota"/>
</dbReference>
<dbReference type="InParanoid" id="P83829"/>
<dbReference type="Reactome" id="R-RNO-5620924">
    <property type="pathway name" value="Intraflagellar transport"/>
</dbReference>
<dbReference type="PRO" id="PR:P83829"/>
<dbReference type="Proteomes" id="UP000002494">
    <property type="component" value="Unplaced"/>
</dbReference>
<dbReference type="GO" id="GO:0005814">
    <property type="term" value="C:centriole"/>
    <property type="evidence" value="ECO:0000266"/>
    <property type="project" value="RGD"/>
</dbReference>
<dbReference type="GO" id="GO:0005813">
    <property type="term" value="C:centrosome"/>
    <property type="evidence" value="ECO:0000266"/>
    <property type="project" value="RGD"/>
</dbReference>
<dbReference type="GO" id="GO:0036064">
    <property type="term" value="C:ciliary basal body"/>
    <property type="evidence" value="ECO:0000250"/>
    <property type="project" value="UniProtKB"/>
</dbReference>
<dbReference type="GO" id="GO:0005929">
    <property type="term" value="C:cilium"/>
    <property type="evidence" value="ECO:0000266"/>
    <property type="project" value="RGD"/>
</dbReference>
<dbReference type="GO" id="GO:0005737">
    <property type="term" value="C:cytoplasm"/>
    <property type="evidence" value="ECO:0000250"/>
    <property type="project" value="UniProtKB"/>
</dbReference>
<dbReference type="GO" id="GO:0030992">
    <property type="term" value="C:intraciliary transport particle B"/>
    <property type="evidence" value="ECO:0000250"/>
    <property type="project" value="UniProtKB"/>
</dbReference>
<dbReference type="GO" id="GO:0097225">
    <property type="term" value="C:sperm midpiece"/>
    <property type="evidence" value="ECO:0000266"/>
    <property type="project" value="RGD"/>
</dbReference>
<dbReference type="GO" id="GO:0097228">
    <property type="term" value="C:sperm principal piece"/>
    <property type="evidence" value="ECO:0000266"/>
    <property type="project" value="RGD"/>
</dbReference>
<dbReference type="GO" id="GO:0015631">
    <property type="term" value="F:tubulin binding"/>
    <property type="evidence" value="ECO:0000250"/>
    <property type="project" value="UniProtKB"/>
</dbReference>
<dbReference type="GO" id="GO:0060271">
    <property type="term" value="P:cilium assembly"/>
    <property type="evidence" value="ECO:0000250"/>
    <property type="project" value="UniProtKB"/>
</dbReference>
<dbReference type="GO" id="GO:0042073">
    <property type="term" value="P:intraciliary transport"/>
    <property type="evidence" value="ECO:0000318"/>
    <property type="project" value="GO_Central"/>
</dbReference>
<dbReference type="GO" id="GO:0035735">
    <property type="term" value="P:intraciliary transport involved in cilium assembly"/>
    <property type="evidence" value="ECO:0000250"/>
    <property type="project" value="UniProtKB"/>
</dbReference>
<dbReference type="GO" id="GO:0008589">
    <property type="term" value="P:regulation of smoothened signaling pathway"/>
    <property type="evidence" value="ECO:0000250"/>
    <property type="project" value="UniProtKB"/>
</dbReference>
<dbReference type="GO" id="GO:0120316">
    <property type="term" value="P:sperm flagellum assembly"/>
    <property type="evidence" value="ECO:0000250"/>
    <property type="project" value="UniProtKB"/>
</dbReference>
<dbReference type="GO" id="GO:0007283">
    <property type="term" value="P:spermatogenesis"/>
    <property type="evidence" value="ECO:0000250"/>
    <property type="project" value="UniProtKB"/>
</dbReference>
<dbReference type="FunFam" id="1.10.418.70:FF:000001">
    <property type="entry name" value="Intraflagellar transport protein 81 homolog"/>
    <property type="match status" value="1"/>
</dbReference>
<dbReference type="Gene3D" id="1.10.418.70">
    <property type="entry name" value="Intraflagellar transport protein 81, N-terminal domain"/>
    <property type="match status" value="1"/>
</dbReference>
<dbReference type="InterPro" id="IPR029600">
    <property type="entry name" value="IFT81"/>
</dbReference>
<dbReference type="InterPro" id="IPR041146">
    <property type="entry name" value="IFT81_CH"/>
</dbReference>
<dbReference type="InterPro" id="IPR043016">
    <property type="entry name" value="IFT81_N_sf"/>
</dbReference>
<dbReference type="PANTHER" id="PTHR15614">
    <property type="entry name" value="INTRAFLAGELLAR TRANSPORT PROTEIN 81 HOMOLOG"/>
    <property type="match status" value="1"/>
</dbReference>
<dbReference type="PANTHER" id="PTHR15614:SF2">
    <property type="entry name" value="INTRAFLAGELLAR TRANSPORT PROTEIN 81 HOMOLOG"/>
    <property type="match status" value="1"/>
</dbReference>
<dbReference type="Pfam" id="PF18383">
    <property type="entry name" value="IFT81_CH"/>
    <property type="match status" value="1"/>
</dbReference>
<gene>
    <name type="primary">Ift81</name>
    <name type="synonym">Cdv1</name>
</gene>
<organism evidence="6">
    <name type="scientific">Rattus norvegicus</name>
    <name type="common">Rat</name>
    <dbReference type="NCBI Taxonomy" id="10116"/>
    <lineage>
        <taxon>Eukaryota</taxon>
        <taxon>Metazoa</taxon>
        <taxon>Chordata</taxon>
        <taxon>Craniata</taxon>
        <taxon>Vertebrata</taxon>
        <taxon>Euteleostomi</taxon>
        <taxon>Mammalia</taxon>
        <taxon>Eutheria</taxon>
        <taxon>Euarchontoglires</taxon>
        <taxon>Glires</taxon>
        <taxon>Rodentia</taxon>
        <taxon>Myomorpha</taxon>
        <taxon>Muroidea</taxon>
        <taxon>Muridae</taxon>
        <taxon>Murinae</taxon>
        <taxon>Rattus</taxon>
    </lineage>
</organism>
<protein>
    <recommendedName>
        <fullName>Intraflagellar transport protein 81 homolog</fullName>
    </recommendedName>
    <alternativeName>
        <fullName>Carnitine deficiency-associated protein expressed in ventricle 1</fullName>
        <shortName>CDV-1</shortName>
    </alternativeName>
</protein>
<accession>P83829</accession>
<reference evidence="6" key="1">
    <citation type="submission" date="2003-07" db="EMBL/GenBank/DDBJ databases">
        <title>Cloning of Rattus norvegicus carnitine deficiency-associated gene expressed in ventricle 1.</title>
        <authorList>
            <person name="Zhou G."/>
            <person name="Wang J."/>
            <person name="Yu L."/>
            <person name="Zhao S."/>
        </authorList>
    </citation>
    <scope>NUCLEOTIDE SEQUENCE [MRNA]</scope>
    <source>
        <strain evidence="6">Sprague-Dawley</strain>
    </source>
</reference>
<keyword id="KW-0007">Acetylation</keyword>
<keyword id="KW-0966">Cell projection</keyword>
<keyword id="KW-0969">Cilium</keyword>
<keyword id="KW-0970">Cilium biogenesis/degradation</keyword>
<keyword id="KW-0175">Coiled coil</keyword>
<keyword id="KW-0963">Cytoplasm</keyword>
<keyword id="KW-0206">Cytoskeleton</keyword>
<keyword id="KW-0221">Differentiation</keyword>
<keyword id="KW-0597">Phosphoprotein</keyword>
<keyword id="KW-1185">Reference proteome</keyword>
<keyword id="KW-0744">Spermatogenesis</keyword>
<proteinExistence type="evidence at transcript level"/>
<sequence>MSDQIKFIVDSLNKEPFKKNYNLITFDSLGPMQLLQVLNDVLAEIDPKQDVDIREETPEQTAKRMLSLLGILKYKPPGNATDMSTFRQGLVIGSKPVIYPVLHWLLQRSSELKKRAYLARFLIKLEVPSEFLQDETVADTNKQYEELMEAFKALHKECEQLKTSGFSTAEIRRDISAMEEEKDQLMKRVERLKKRVETVQNHQRMLKIARQLRVEKEREEFLAQQKQEQKNQLFHAVQRLQRVQNQLKSMRHAAADAKPESLMKRLEEEIKFNSYMVTEKFPKELESKKKELHFLQKVVSEPAMGHSDLLELESKVNEVNAEINQLIEKKMMRNEPIEGKLSLYRQQASIISRKKEAKAEELQETKEKLASLEREVSVKTNQTREFDGTEVLKGDEFKRYVSKLRSKSTVFKKKHQIIAEFKAEFGLLQRTEELLKQRQETIQHQLRTIEEKKGISGYSYTQEELERVSALKSEVDEMKGRTLDDMSEMVKKLNSLVSEKKSALAPVIKELRQLRQKCQLTQECDEKRTQYDSCAAGLESNRSKLEQEVRGLREECLQEESKYHYTNCMIKNLEVQLRRATDEMKAYVSSDQQEKRKAIREQYTKNITEQENLGKKLREKQKAVRESHGPNMKQAKMWRDLEQLMECKKQCFLKQQSPASIGQVIQEGGEDRLVL</sequence>
<evidence type="ECO:0000250" key="1"/>
<evidence type="ECO:0000250" key="2">
    <source>
        <dbReference type="UniProtKB" id="O35594"/>
    </source>
</evidence>
<evidence type="ECO:0000250" key="3">
    <source>
        <dbReference type="UniProtKB" id="Q8WYA0"/>
    </source>
</evidence>
<evidence type="ECO:0000255" key="4"/>
<evidence type="ECO:0000305" key="5"/>
<evidence type="ECO:0000312" key="6">
    <source>
        <dbReference type="EMBL" id="AAQ23131.1"/>
    </source>
</evidence>
<name>IFT81_RAT</name>